<evidence type="ECO:0000250" key="1"/>
<evidence type="ECO:0000255" key="2">
    <source>
        <dbReference type="HAMAP-Rule" id="MF_00100"/>
    </source>
</evidence>
<evidence type="ECO:0000256" key="3">
    <source>
        <dbReference type="SAM" id="MobiDB-lite"/>
    </source>
</evidence>
<organism>
    <name type="scientific">Clostridium botulinum (strain Langeland / NCTC 10281 / Type F)</name>
    <dbReference type="NCBI Taxonomy" id="441772"/>
    <lineage>
        <taxon>Bacteria</taxon>
        <taxon>Bacillati</taxon>
        <taxon>Bacillota</taxon>
        <taxon>Clostridia</taxon>
        <taxon>Eubacteriales</taxon>
        <taxon>Clostridiaceae</taxon>
        <taxon>Clostridium</taxon>
    </lineage>
</organism>
<keyword id="KW-0963">Cytoplasm</keyword>
<keyword id="KW-0342">GTP-binding</keyword>
<keyword id="KW-0396">Initiation factor</keyword>
<keyword id="KW-0547">Nucleotide-binding</keyword>
<keyword id="KW-0648">Protein biosynthesis</keyword>
<feature type="chain" id="PRO_1000008231" description="Translation initiation factor IF-2">
    <location>
        <begin position="1"/>
        <end position="688"/>
    </location>
</feature>
<feature type="domain" description="tr-type G">
    <location>
        <begin position="187"/>
        <end position="354"/>
    </location>
</feature>
<feature type="region of interest" description="Disordered" evidence="3">
    <location>
        <begin position="50"/>
        <end position="95"/>
    </location>
</feature>
<feature type="region of interest" description="G1" evidence="1">
    <location>
        <begin position="196"/>
        <end position="203"/>
    </location>
</feature>
<feature type="region of interest" description="G2" evidence="1">
    <location>
        <begin position="221"/>
        <end position="225"/>
    </location>
</feature>
<feature type="region of interest" description="G3" evidence="1">
    <location>
        <begin position="242"/>
        <end position="245"/>
    </location>
</feature>
<feature type="region of interest" description="G4" evidence="1">
    <location>
        <begin position="296"/>
        <end position="299"/>
    </location>
</feature>
<feature type="region of interest" description="G5" evidence="1">
    <location>
        <begin position="332"/>
        <end position="334"/>
    </location>
</feature>
<feature type="compositionally biased region" description="Basic and acidic residues" evidence="3">
    <location>
        <begin position="50"/>
        <end position="62"/>
    </location>
</feature>
<feature type="compositionally biased region" description="Low complexity" evidence="3">
    <location>
        <begin position="72"/>
        <end position="82"/>
    </location>
</feature>
<feature type="compositionally biased region" description="Basic and acidic residues" evidence="3">
    <location>
        <begin position="86"/>
        <end position="95"/>
    </location>
</feature>
<feature type="binding site" evidence="2">
    <location>
        <begin position="196"/>
        <end position="203"/>
    </location>
    <ligand>
        <name>GTP</name>
        <dbReference type="ChEBI" id="CHEBI:37565"/>
    </ligand>
</feature>
<feature type="binding site" evidence="2">
    <location>
        <begin position="242"/>
        <end position="246"/>
    </location>
    <ligand>
        <name>GTP</name>
        <dbReference type="ChEBI" id="CHEBI:37565"/>
    </ligand>
</feature>
<feature type="binding site" evidence="2">
    <location>
        <begin position="296"/>
        <end position="299"/>
    </location>
    <ligand>
        <name>GTP</name>
        <dbReference type="ChEBI" id="CHEBI:37565"/>
    </ligand>
</feature>
<name>IF2_CLOBL</name>
<gene>
    <name evidence="2" type="primary">infB</name>
    <name type="ordered locus">CLI_2474</name>
</gene>
<comment type="function">
    <text evidence="2">One of the essential components for the initiation of protein synthesis. Protects formylmethionyl-tRNA from spontaneous hydrolysis and promotes its binding to the 30S ribosomal subunits. Also involved in the hydrolysis of GTP during the formation of the 70S ribosomal complex.</text>
</comment>
<comment type="subcellular location">
    <subcellularLocation>
        <location evidence="2">Cytoplasm</location>
    </subcellularLocation>
</comment>
<comment type="similarity">
    <text evidence="2">Belongs to the TRAFAC class translation factor GTPase superfamily. Classic translation factor GTPase family. IF-2 subfamily.</text>
</comment>
<accession>A7GG06</accession>
<proteinExistence type="inferred from homology"/>
<reference key="1">
    <citation type="submission" date="2007-06" db="EMBL/GenBank/DDBJ databases">
        <authorList>
            <person name="Brinkac L.M."/>
            <person name="Daugherty S."/>
            <person name="Dodson R.J."/>
            <person name="Madupu R."/>
            <person name="Brown J.L."/>
            <person name="Bruce D."/>
            <person name="Detter C."/>
            <person name="Munk C."/>
            <person name="Smith L.A."/>
            <person name="Smith T.J."/>
            <person name="White O."/>
            <person name="Brettin T.S."/>
        </authorList>
    </citation>
    <scope>NUCLEOTIDE SEQUENCE [LARGE SCALE GENOMIC DNA]</scope>
    <source>
        <strain>Langeland / NCTC 10281 / Type F</strain>
    </source>
</reference>
<dbReference type="EMBL" id="CP000728">
    <property type="protein sequence ID" value="ABS40489.1"/>
    <property type="molecule type" value="Genomic_DNA"/>
</dbReference>
<dbReference type="RefSeq" id="WP_012100373.1">
    <property type="nucleotide sequence ID" value="NC_009699.1"/>
</dbReference>
<dbReference type="SMR" id="A7GG06"/>
<dbReference type="KEGG" id="cbf:CLI_2474"/>
<dbReference type="HOGENOM" id="CLU_006301_5_1_9"/>
<dbReference type="Proteomes" id="UP000002410">
    <property type="component" value="Chromosome"/>
</dbReference>
<dbReference type="GO" id="GO:0005829">
    <property type="term" value="C:cytosol"/>
    <property type="evidence" value="ECO:0007669"/>
    <property type="project" value="TreeGrafter"/>
</dbReference>
<dbReference type="GO" id="GO:0005525">
    <property type="term" value="F:GTP binding"/>
    <property type="evidence" value="ECO:0007669"/>
    <property type="project" value="UniProtKB-KW"/>
</dbReference>
<dbReference type="GO" id="GO:0003924">
    <property type="term" value="F:GTPase activity"/>
    <property type="evidence" value="ECO:0007669"/>
    <property type="project" value="UniProtKB-UniRule"/>
</dbReference>
<dbReference type="GO" id="GO:0003743">
    <property type="term" value="F:translation initiation factor activity"/>
    <property type="evidence" value="ECO:0007669"/>
    <property type="project" value="UniProtKB-UniRule"/>
</dbReference>
<dbReference type="CDD" id="cd01887">
    <property type="entry name" value="IF2_eIF5B"/>
    <property type="match status" value="1"/>
</dbReference>
<dbReference type="CDD" id="cd03702">
    <property type="entry name" value="IF2_mtIF2_II"/>
    <property type="match status" value="1"/>
</dbReference>
<dbReference type="CDD" id="cd03692">
    <property type="entry name" value="mtIF2_IVc"/>
    <property type="match status" value="1"/>
</dbReference>
<dbReference type="FunFam" id="2.40.30.10:FF:000007">
    <property type="entry name" value="Translation initiation factor IF-2"/>
    <property type="match status" value="1"/>
</dbReference>
<dbReference type="FunFam" id="2.40.30.10:FF:000008">
    <property type="entry name" value="Translation initiation factor IF-2"/>
    <property type="match status" value="1"/>
</dbReference>
<dbReference type="FunFam" id="3.40.50.10050:FF:000001">
    <property type="entry name" value="Translation initiation factor IF-2"/>
    <property type="match status" value="1"/>
</dbReference>
<dbReference type="FunFam" id="3.40.50.300:FF:000019">
    <property type="entry name" value="Translation initiation factor IF-2"/>
    <property type="match status" value="1"/>
</dbReference>
<dbReference type="Gene3D" id="1.10.10.2480">
    <property type="match status" value="1"/>
</dbReference>
<dbReference type="Gene3D" id="3.40.50.300">
    <property type="entry name" value="P-loop containing nucleotide triphosphate hydrolases"/>
    <property type="match status" value="1"/>
</dbReference>
<dbReference type="Gene3D" id="2.40.30.10">
    <property type="entry name" value="Translation factors"/>
    <property type="match status" value="2"/>
</dbReference>
<dbReference type="Gene3D" id="3.40.50.10050">
    <property type="entry name" value="Translation initiation factor IF- 2, domain 3"/>
    <property type="match status" value="1"/>
</dbReference>
<dbReference type="HAMAP" id="MF_00100_B">
    <property type="entry name" value="IF_2_B"/>
    <property type="match status" value="1"/>
</dbReference>
<dbReference type="InterPro" id="IPR053905">
    <property type="entry name" value="EF-G-like_DII"/>
</dbReference>
<dbReference type="InterPro" id="IPR044145">
    <property type="entry name" value="IF2_II"/>
</dbReference>
<dbReference type="InterPro" id="IPR006847">
    <property type="entry name" value="IF2_N"/>
</dbReference>
<dbReference type="InterPro" id="IPR027417">
    <property type="entry name" value="P-loop_NTPase"/>
</dbReference>
<dbReference type="InterPro" id="IPR005225">
    <property type="entry name" value="Small_GTP-bd"/>
</dbReference>
<dbReference type="InterPro" id="IPR000795">
    <property type="entry name" value="T_Tr_GTP-bd_dom"/>
</dbReference>
<dbReference type="InterPro" id="IPR000178">
    <property type="entry name" value="TF_IF2_bacterial-like"/>
</dbReference>
<dbReference type="InterPro" id="IPR015760">
    <property type="entry name" value="TIF_IF2"/>
</dbReference>
<dbReference type="InterPro" id="IPR023115">
    <property type="entry name" value="TIF_IF2_dom3"/>
</dbReference>
<dbReference type="InterPro" id="IPR036925">
    <property type="entry name" value="TIF_IF2_dom3_sf"/>
</dbReference>
<dbReference type="InterPro" id="IPR009000">
    <property type="entry name" value="Transl_B-barrel_sf"/>
</dbReference>
<dbReference type="NCBIfam" id="TIGR00487">
    <property type="entry name" value="IF-2"/>
    <property type="match status" value="1"/>
</dbReference>
<dbReference type="NCBIfam" id="TIGR00231">
    <property type="entry name" value="small_GTP"/>
    <property type="match status" value="1"/>
</dbReference>
<dbReference type="PANTHER" id="PTHR43381:SF5">
    <property type="entry name" value="TR-TYPE G DOMAIN-CONTAINING PROTEIN"/>
    <property type="match status" value="1"/>
</dbReference>
<dbReference type="PANTHER" id="PTHR43381">
    <property type="entry name" value="TRANSLATION INITIATION FACTOR IF-2-RELATED"/>
    <property type="match status" value="1"/>
</dbReference>
<dbReference type="Pfam" id="PF22042">
    <property type="entry name" value="EF-G_D2"/>
    <property type="match status" value="1"/>
</dbReference>
<dbReference type="Pfam" id="PF00009">
    <property type="entry name" value="GTP_EFTU"/>
    <property type="match status" value="1"/>
</dbReference>
<dbReference type="Pfam" id="PF11987">
    <property type="entry name" value="IF-2"/>
    <property type="match status" value="1"/>
</dbReference>
<dbReference type="Pfam" id="PF04760">
    <property type="entry name" value="IF2_N"/>
    <property type="match status" value="2"/>
</dbReference>
<dbReference type="SUPFAM" id="SSF52156">
    <property type="entry name" value="Initiation factor IF2/eIF5b, domain 3"/>
    <property type="match status" value="1"/>
</dbReference>
<dbReference type="SUPFAM" id="SSF52540">
    <property type="entry name" value="P-loop containing nucleoside triphosphate hydrolases"/>
    <property type="match status" value="1"/>
</dbReference>
<dbReference type="SUPFAM" id="SSF50447">
    <property type="entry name" value="Translation proteins"/>
    <property type="match status" value="2"/>
</dbReference>
<dbReference type="PROSITE" id="PS51722">
    <property type="entry name" value="G_TR_2"/>
    <property type="match status" value="1"/>
</dbReference>
<dbReference type="PROSITE" id="PS01176">
    <property type="entry name" value="IF2"/>
    <property type="match status" value="1"/>
</dbReference>
<sequence length="688" mass="75590">MAKIRVYELAKELNISSKELITLLEEEFSVEVKNHMSAIEDEDADLIKELLSGKEKSEKTKEEDDEIETTAKNPIKESINNKKSNKRDDKNEKVNTENAEDMAIITMTSDTITVKEISDKLEKSYAEVIKELMLMGVMASVNQEINFEMAEKLAAKFDTEILKEEQDEEDDLEDILKDSEEEENLQKRSPIITVMGHVDHGKTSLLDAIRKSKVTSTEAGGITQHIGAYTVELNGESITFLDTPGHAAFTAMRARGAQVTDIVILVVAADDGIMPQTKEAISHCKAAEVPLIVAINKIDRPGANIDKVKQELTEYGLVAEDWGGDTVCVPVSAHTKEGIDELLEMILLSSEILELKANPNRKAKGTVVEAKLDKGRGPVATLLVQNGTLTVGDSIVVGSTYGRIRAMFNDKGENIQSAGPSTPVGILGLSEVPEAGDKFYQVKDEKTARGIADKRKEKIRDEYLQSTHKVSLEDLYNQIREGKVKELGLIVKADVQGSVEALKQSLEKLSTEEVKVRVIHGGVGAINETDVTLATASNGIILGFNVRPDNNAIIASERDGVDIKTYRVIYDAIEDIKSAMLGMLEPEFKEVVIGTAEVRQVYKISSVGTIAGAYVQTGKLARNAGARVIRDGIVIFESELASLKRFKDDAKEVAQGYECGLSIEKFNDIKEGDIIECFIMEEIKKKTL</sequence>
<protein>
    <recommendedName>
        <fullName evidence="2">Translation initiation factor IF-2</fullName>
    </recommendedName>
</protein>